<comment type="function">
    <text evidence="1">Anti-CRISPR protein that inactivates the type I-F CRISPR-Cas systems of the host by blocking its ability to recognize target DNA (PubMed:31474367). Inhibits therefore the degradation of the viral DNA by the host (PubMed:31474367).</text>
</comment>
<comment type="activity regulation">
    <text evidence="3">Inhibited by phage protein Aca2 repressor (AC H9C180) both at the transcription and translatio levels.</text>
</comment>
<comment type="subunit">
    <text evidence="2">Interacts with host rRNA-guided surveillance complex (Csy complex) used to recognize the invading DNA; this interaction prevents DNA hybridization in the Csy complex (PubMed:32170016). Binds to a the Csy spiral backbone (PubMed:32170016).</text>
</comment>
<protein>
    <recommendedName>
        <fullName>Anti-CRISPR protein AcrF8</fullName>
    </recommendedName>
    <alternativeName>
        <fullName>AcrIF8</fullName>
    </alternativeName>
</protein>
<gene>
    <name type="ORF">ZF40_0031</name>
</gene>
<organism>
    <name type="scientific">Pectobacterium phage ZF40</name>
    <name type="common">Bacteriophage ZF40</name>
    <dbReference type="NCBI Taxonomy" id="1127516"/>
    <lineage>
        <taxon>Viruses</taxon>
        <taxon>Duplodnaviria</taxon>
        <taxon>Heunggongvirae</taxon>
        <taxon>Uroviricota</taxon>
        <taxon>Caudoviricetes</taxon>
    </lineage>
</organism>
<organismHost>
    <name type="scientific">Pectobacterium carotovorum</name>
    <name type="common">Erwinia carotovora</name>
    <dbReference type="NCBI Taxonomy" id="554"/>
</organismHost>
<dbReference type="EMBL" id="JQ177065">
    <property type="protein sequence ID" value="AFC22483.1"/>
    <property type="molecule type" value="Genomic_DNA"/>
</dbReference>
<dbReference type="RefSeq" id="YP_007006940.1">
    <property type="nucleotide sequence ID" value="NC_019522.1"/>
</dbReference>
<dbReference type="PDB" id="6VQW">
    <property type="method" value="EM"/>
    <property type="resolution" value="3.42 A"/>
    <property type="chains" value="I=1-92"/>
</dbReference>
<dbReference type="PDBsum" id="6VQW"/>
<dbReference type="EMDB" id="EMD-21359"/>
<dbReference type="SMR" id="H9C181"/>
<dbReference type="GeneID" id="14012447"/>
<dbReference type="KEGG" id="vg:14012447"/>
<dbReference type="Proteomes" id="UP000005230">
    <property type="component" value="Segment"/>
</dbReference>
<dbReference type="GO" id="GO:0052170">
    <property type="term" value="P:symbiont-mediated suppression of host innate immune response"/>
    <property type="evidence" value="ECO:0007669"/>
    <property type="project" value="UniProtKB-KW"/>
</dbReference>
<dbReference type="CDD" id="cd22241">
    <property type="entry name" value="AcrIF8"/>
    <property type="match status" value="1"/>
</dbReference>
<reference key="1">
    <citation type="journal article" date="2012" name="PLoS ONE">
        <title>Phage morphology recapitulates phylogeny: the comparative genomics of a new group of myoviruses.</title>
        <authorList>
            <person name="Comeau A.M."/>
            <person name="Tremblay D."/>
            <person name="Moineau S."/>
            <person name="Rattei T."/>
            <person name="Kushkina A.I."/>
            <person name="Tovkach F.I."/>
            <person name="Krisch H.M."/>
            <person name="Ackermann H.W."/>
        </authorList>
    </citation>
    <scope>NUCLEOTIDE SEQUENCE [LARGE SCALE GENOMIC DNA]</scope>
</reference>
<reference key="2">
    <citation type="journal article" date="2019" name="Cell">
        <title>Anti-CRISPR-Associated Proteins Are Crucial Repressors of Anti-CRISPR Transcription.</title>
        <authorList>
            <person name="Stanley S.Y."/>
            <person name="Borges A.L."/>
            <person name="Chen K.H."/>
            <person name="Swaney D.L."/>
            <person name="Krogan N.J."/>
            <person name="Bondy-Denomy J."/>
            <person name="Davidson A.R."/>
        </authorList>
    </citation>
    <scope>FUNCTION</scope>
</reference>
<reference key="3">
    <citation type="journal article" date="2024" name="Nature">
        <title>Phage anti-CRISPR control by an RNA- and DNA-binding helix-turn-helix protein.</title>
        <authorList>
            <person name="Birkholz N."/>
            <person name="Kamata K."/>
            <person name="Feussner M."/>
            <person name="Wilkinson M.E."/>
            <person name="Cuba Samaniego C."/>
            <person name="Migur A."/>
            <person name="Kimanius D."/>
            <person name="Ceelen M."/>
            <person name="Went S.C."/>
            <person name="Usher B."/>
            <person name="Blower T.R."/>
            <person name="Brown C.M."/>
            <person name="Beisel C.L."/>
            <person name="Weinberg Z."/>
            <person name="Fagerlund R.D."/>
            <person name="Jackson S.A."/>
            <person name="Fineran P.C."/>
        </authorList>
    </citation>
    <scope>ACTIVITY REGULATION</scope>
</reference>
<reference key="4">
    <citation type="journal article" date="2020" name="Proc. Natl. Acad. Sci. U.S.A.">
        <title>Inhibition mechanisms of AcrF9, AcrF8, and AcrF6 against type I-F CRISPR-Cas complex revealed by cryo-EM.</title>
        <authorList>
            <person name="Zhang K."/>
            <person name="Wang S."/>
            <person name="Li S."/>
            <person name="Zhu Y."/>
            <person name="Pintilie G.D."/>
            <person name="Mou T.C."/>
            <person name="Schmid M.F."/>
            <person name="Huang Z."/>
            <person name="Chiu W."/>
        </authorList>
    </citation>
    <scope>STRUCTURE BY ELECTRON MICROSCOPY (3.42 ANGSTROMS)</scope>
    <scope>INTERACTION WITH HOST RRNA-GUIDED SURVEILLANCE COMPLEX (CSY COMPLEX)</scope>
    <scope>MUTAGENESIS OF ILE-31 AND ALA-32</scope>
</reference>
<feature type="chain" id="PRO_0000461779" description="Anti-CRISPR protein AcrF8">
    <location>
        <begin position="1"/>
        <end position="92"/>
    </location>
</feature>
<feature type="mutagenesis site" description="Loss of inhibition of target DNA cleavage by the host Csy complex." evidence="2">
    <original>I</original>
    <variation>A</variation>
    <location>
        <position position="31"/>
    </location>
</feature>
<feature type="mutagenesis site" description="Loss of inhibition of target DNA cleavage by the host Csy complex." evidence="2">
    <original>A</original>
    <variation>G</variation>
    <location>
        <position position="32"/>
    </location>
</feature>
<sequence>MARIAPNEDSTMSTAYIIFNSSVAAVVDTEIANGANVTFSTVTVKEEINANRDFNLVNAQNGKISRAKRWGNEASKCEYFGREINPTEFFIK</sequence>
<accession>H9C181</accession>
<name>ACRF8_BPZF4</name>
<keyword id="KW-0002">3D-structure</keyword>
<keyword id="KW-0945">Host-virus interaction</keyword>
<keyword id="KW-1090">Inhibition of host innate immune response by virus</keyword>
<keyword id="KW-1185">Reference proteome</keyword>
<keyword id="KW-0899">Viral immunoevasion</keyword>
<evidence type="ECO:0000269" key="1">
    <source>
    </source>
</evidence>
<evidence type="ECO:0000269" key="2">
    <source>
    </source>
</evidence>
<evidence type="ECO:0000269" key="3">
    <source>
    </source>
</evidence>
<proteinExistence type="evidence at protein level"/>